<keyword id="KW-1185">Reference proteome</keyword>
<keyword id="KW-0687">Ribonucleoprotein</keyword>
<keyword id="KW-0689">Ribosomal protein</keyword>
<gene>
    <name evidence="1" type="primary">rpsP</name>
    <name type="ordered locus">LEUM_1485</name>
</gene>
<sequence length="139" mass="15168">MAVKIRLKRMGAKKRPFYRVVIADSRSPRDGRFIETVGTYNPISQPAEIKLDEEKILSWLGNGAQPSDTVRNLLSNAGILAKYNESKSGKKPAKKATTKEASAKKPTDKNTVAEIKAYLDAQGTAYTSSAKKADLLALV</sequence>
<feature type="chain" id="PRO_1000049283" description="Small ribosomal subunit protein bS16">
    <location>
        <begin position="1"/>
        <end position="139"/>
    </location>
</feature>
<feature type="region of interest" description="Disordered" evidence="2">
    <location>
        <begin position="85"/>
        <end position="108"/>
    </location>
</feature>
<feature type="compositionally biased region" description="Basic and acidic residues" evidence="2">
    <location>
        <begin position="97"/>
        <end position="108"/>
    </location>
</feature>
<reference key="1">
    <citation type="journal article" date="2006" name="Proc. Natl. Acad. Sci. U.S.A.">
        <title>Comparative genomics of the lactic acid bacteria.</title>
        <authorList>
            <person name="Makarova K.S."/>
            <person name="Slesarev A."/>
            <person name="Wolf Y.I."/>
            <person name="Sorokin A."/>
            <person name="Mirkin B."/>
            <person name="Koonin E.V."/>
            <person name="Pavlov A."/>
            <person name="Pavlova N."/>
            <person name="Karamychev V."/>
            <person name="Polouchine N."/>
            <person name="Shakhova V."/>
            <person name="Grigoriev I."/>
            <person name="Lou Y."/>
            <person name="Rohksar D."/>
            <person name="Lucas S."/>
            <person name="Huang K."/>
            <person name="Goodstein D.M."/>
            <person name="Hawkins T."/>
            <person name="Plengvidhya V."/>
            <person name="Welker D."/>
            <person name="Hughes J."/>
            <person name="Goh Y."/>
            <person name="Benson A."/>
            <person name="Baldwin K."/>
            <person name="Lee J.-H."/>
            <person name="Diaz-Muniz I."/>
            <person name="Dosti B."/>
            <person name="Smeianov V."/>
            <person name="Wechter W."/>
            <person name="Barabote R."/>
            <person name="Lorca G."/>
            <person name="Altermann E."/>
            <person name="Barrangou R."/>
            <person name="Ganesan B."/>
            <person name="Xie Y."/>
            <person name="Rawsthorne H."/>
            <person name="Tamir D."/>
            <person name="Parker C."/>
            <person name="Breidt F."/>
            <person name="Broadbent J.R."/>
            <person name="Hutkins R."/>
            <person name="O'Sullivan D."/>
            <person name="Steele J."/>
            <person name="Unlu G."/>
            <person name="Saier M.H. Jr."/>
            <person name="Klaenhammer T."/>
            <person name="Richardson P."/>
            <person name="Kozyavkin S."/>
            <person name="Weimer B.C."/>
            <person name="Mills D.A."/>
        </authorList>
    </citation>
    <scope>NUCLEOTIDE SEQUENCE [LARGE SCALE GENOMIC DNA]</scope>
    <source>
        <strain>ATCC 8293 / DSM 20343 / BCRC 11652 / CCM 1803 / JCM 6124 / NCDO 523 / NBRC 100496 / NCIMB 8023 / NCTC 12954 / NRRL B-1118 / 37Y</strain>
    </source>
</reference>
<comment type="similarity">
    <text evidence="1">Belongs to the bacterial ribosomal protein bS16 family.</text>
</comment>
<organism>
    <name type="scientific">Leuconostoc mesenteroides subsp. mesenteroides (strain ATCC 8293 / DSM 20343 / BCRC 11652 / CCM 1803 / JCM 6124 / NCDO 523 / NBRC 100496 / NCIMB 8023 / NCTC 12954 / NRRL B-1118 / 37Y)</name>
    <dbReference type="NCBI Taxonomy" id="203120"/>
    <lineage>
        <taxon>Bacteria</taxon>
        <taxon>Bacillati</taxon>
        <taxon>Bacillota</taxon>
        <taxon>Bacilli</taxon>
        <taxon>Lactobacillales</taxon>
        <taxon>Lactobacillaceae</taxon>
        <taxon>Leuconostoc</taxon>
    </lineage>
</organism>
<protein>
    <recommendedName>
        <fullName evidence="1">Small ribosomal subunit protein bS16</fullName>
    </recommendedName>
    <alternativeName>
        <fullName evidence="3">30S ribosomal protein S16</fullName>
    </alternativeName>
</protein>
<proteinExistence type="inferred from homology"/>
<name>RS16_LEUMM</name>
<dbReference type="EMBL" id="CP000414">
    <property type="protein sequence ID" value="ABJ62577.1"/>
    <property type="molecule type" value="Genomic_DNA"/>
</dbReference>
<dbReference type="RefSeq" id="WP_011680164.1">
    <property type="nucleotide sequence ID" value="NC_008531.1"/>
</dbReference>
<dbReference type="SMR" id="Q03W45"/>
<dbReference type="EnsemblBacteria" id="ABJ62577">
    <property type="protein sequence ID" value="ABJ62577"/>
    <property type="gene ID" value="LEUM_1485"/>
</dbReference>
<dbReference type="GeneID" id="29576342"/>
<dbReference type="KEGG" id="lme:LEUM_1485"/>
<dbReference type="eggNOG" id="COG0228">
    <property type="taxonomic scope" value="Bacteria"/>
</dbReference>
<dbReference type="HOGENOM" id="CLU_100590_3_2_9"/>
<dbReference type="Proteomes" id="UP000000362">
    <property type="component" value="Chromosome"/>
</dbReference>
<dbReference type="GO" id="GO:0005737">
    <property type="term" value="C:cytoplasm"/>
    <property type="evidence" value="ECO:0007669"/>
    <property type="project" value="UniProtKB-ARBA"/>
</dbReference>
<dbReference type="GO" id="GO:0015935">
    <property type="term" value="C:small ribosomal subunit"/>
    <property type="evidence" value="ECO:0007669"/>
    <property type="project" value="TreeGrafter"/>
</dbReference>
<dbReference type="GO" id="GO:0003735">
    <property type="term" value="F:structural constituent of ribosome"/>
    <property type="evidence" value="ECO:0007669"/>
    <property type="project" value="InterPro"/>
</dbReference>
<dbReference type="GO" id="GO:0006412">
    <property type="term" value="P:translation"/>
    <property type="evidence" value="ECO:0007669"/>
    <property type="project" value="UniProtKB-UniRule"/>
</dbReference>
<dbReference type="FunFam" id="3.30.1320.10:FF:000002">
    <property type="entry name" value="30S ribosomal protein S16"/>
    <property type="match status" value="1"/>
</dbReference>
<dbReference type="Gene3D" id="3.30.1320.10">
    <property type="match status" value="1"/>
</dbReference>
<dbReference type="Gene3D" id="1.10.720.30">
    <property type="entry name" value="SAP domain"/>
    <property type="match status" value="1"/>
</dbReference>
<dbReference type="HAMAP" id="MF_00385">
    <property type="entry name" value="Ribosomal_bS16"/>
    <property type="match status" value="1"/>
</dbReference>
<dbReference type="InterPro" id="IPR000307">
    <property type="entry name" value="Ribosomal_bS16"/>
</dbReference>
<dbReference type="InterPro" id="IPR020592">
    <property type="entry name" value="Ribosomal_bS16_CS"/>
</dbReference>
<dbReference type="InterPro" id="IPR023803">
    <property type="entry name" value="Ribosomal_bS16_dom_sf"/>
</dbReference>
<dbReference type="InterPro" id="IPR036361">
    <property type="entry name" value="SAP_dom_sf"/>
</dbReference>
<dbReference type="NCBIfam" id="TIGR00002">
    <property type="entry name" value="S16"/>
    <property type="match status" value="1"/>
</dbReference>
<dbReference type="PANTHER" id="PTHR12919">
    <property type="entry name" value="30S RIBOSOMAL PROTEIN S16"/>
    <property type="match status" value="1"/>
</dbReference>
<dbReference type="PANTHER" id="PTHR12919:SF20">
    <property type="entry name" value="SMALL RIBOSOMAL SUBUNIT PROTEIN BS16M"/>
    <property type="match status" value="1"/>
</dbReference>
<dbReference type="Pfam" id="PF00886">
    <property type="entry name" value="Ribosomal_S16"/>
    <property type="match status" value="1"/>
</dbReference>
<dbReference type="SUPFAM" id="SSF54565">
    <property type="entry name" value="Ribosomal protein S16"/>
    <property type="match status" value="1"/>
</dbReference>
<dbReference type="PROSITE" id="PS00732">
    <property type="entry name" value="RIBOSOMAL_S16"/>
    <property type="match status" value="1"/>
</dbReference>
<evidence type="ECO:0000255" key="1">
    <source>
        <dbReference type="HAMAP-Rule" id="MF_00385"/>
    </source>
</evidence>
<evidence type="ECO:0000256" key="2">
    <source>
        <dbReference type="SAM" id="MobiDB-lite"/>
    </source>
</evidence>
<evidence type="ECO:0000305" key="3"/>
<accession>Q03W45</accession>